<keyword id="KW-0002">3D-structure</keyword>
<keyword id="KW-0007">Acetylation</keyword>
<keyword id="KW-0249">Electron transport</keyword>
<keyword id="KW-0349">Heme</keyword>
<keyword id="KW-0408">Iron</keyword>
<keyword id="KW-0479">Metal-binding</keyword>
<keyword id="KW-0496">Mitochondrion</keyword>
<keyword id="KW-0679">Respiratory chain</keyword>
<keyword id="KW-0813">Transport</keyword>
<gene>
    <name type="primary">cyc</name>
</gene>
<name>CYC_THUAA</name>
<sequence>GDVAKGKKTFVQKCAQCHTVENGGKHKVGPNLWGLFGRKTGQAEGYSYTDANKSKGIVWNNDTLMEYLENPKKYIPGTKMIFAGIKKKGERQDLVAYLKSATS</sequence>
<accession>P81459</accession>
<comment type="function">
    <text>Electron carrier protein. The oxidized form of the cytochrome c heme group can accept an electron from the heme group of the cytochrome c1 subunit of cytochrome reductase. Cytochrome c then transfers this electron to the cytochrome oxidase complex, the final protein carrier in the mitochondrial electron-transport chain.</text>
</comment>
<comment type="subcellular location">
    <subcellularLocation>
        <location>Mitochondrion intermembrane space</location>
    </subcellularLocation>
    <text>Loosely associated with the inner membrane.</text>
</comment>
<comment type="PTM">
    <text>Binds 1 heme c group covalently per subunit.</text>
</comment>
<comment type="similarity">
    <text evidence="2">Belongs to the cytochrome c family.</text>
</comment>
<comment type="online information" name="Protein Spotlight">
    <link uri="https://www.proteinspotlight.org/back_issues/076"/>
    <text>Life shuttle - Issue 76 of November 2006</text>
</comment>
<proteinExistence type="evidence at protein level"/>
<protein>
    <recommendedName>
        <fullName>Cytochrome c</fullName>
    </recommendedName>
</protein>
<feature type="chain" id="PRO_0000108255" description="Cytochrome c">
    <location>
        <begin position="1"/>
        <end position="103"/>
    </location>
</feature>
<feature type="binding site" description="covalent">
    <location>
        <position position="14"/>
    </location>
    <ligand>
        <name>heme c</name>
        <dbReference type="ChEBI" id="CHEBI:61717"/>
    </ligand>
</feature>
<feature type="binding site" description="covalent">
    <location>
        <position position="17"/>
    </location>
    <ligand>
        <name>heme c</name>
        <dbReference type="ChEBI" id="CHEBI:61717"/>
    </ligand>
</feature>
<feature type="binding site" description="axial binding residue">
    <location>
        <position position="18"/>
    </location>
    <ligand>
        <name>heme c</name>
        <dbReference type="ChEBI" id="CHEBI:61717"/>
    </ligand>
    <ligandPart>
        <name>Fe</name>
        <dbReference type="ChEBI" id="CHEBI:18248"/>
    </ligandPart>
</feature>
<feature type="binding site" description="axial binding residue">
    <location>
        <position position="80"/>
    </location>
    <ligand>
        <name>heme c</name>
        <dbReference type="ChEBI" id="CHEBI:61717"/>
    </ligand>
    <ligandPart>
        <name>Fe</name>
        <dbReference type="ChEBI" id="CHEBI:18248"/>
    </ligandPart>
</feature>
<feature type="modified residue" description="N-acetylglycine" evidence="1">
    <location>
        <position position="1"/>
    </location>
</feature>
<feature type="helix" evidence="3">
    <location>
        <begin position="3"/>
        <end position="13"/>
    </location>
</feature>
<feature type="turn" evidence="3">
    <location>
        <begin position="14"/>
        <end position="17"/>
    </location>
</feature>
<feature type="strand" evidence="4">
    <location>
        <begin position="27"/>
        <end position="29"/>
    </location>
</feature>
<feature type="helix" evidence="3">
    <location>
        <begin position="50"/>
        <end position="54"/>
    </location>
</feature>
<feature type="helix" evidence="3">
    <location>
        <begin position="61"/>
        <end position="69"/>
    </location>
</feature>
<feature type="helix" evidence="3">
    <location>
        <begin position="71"/>
        <end position="74"/>
    </location>
</feature>
<feature type="helix" evidence="3">
    <location>
        <begin position="88"/>
        <end position="101"/>
    </location>
</feature>
<dbReference type="PDB" id="1I54">
    <property type="method" value="X-ray"/>
    <property type="resolution" value="1.50 A"/>
    <property type="chains" value="A/B=1-103"/>
</dbReference>
<dbReference type="PDB" id="1I55">
    <property type="method" value="X-ray"/>
    <property type="resolution" value="2.00 A"/>
    <property type="chains" value="A/B=1-103"/>
</dbReference>
<dbReference type="PDB" id="1LFM">
    <property type="method" value="X-ray"/>
    <property type="resolution" value="1.50 A"/>
    <property type="chains" value="A/B=1-103"/>
</dbReference>
<dbReference type="PDB" id="3CYT">
    <property type="method" value="X-ray"/>
    <property type="resolution" value="1.80 A"/>
    <property type="chains" value="I/O=1-103"/>
</dbReference>
<dbReference type="PDB" id="5CYT">
    <property type="method" value="X-ray"/>
    <property type="resolution" value="1.50 A"/>
    <property type="chains" value="R=1-103"/>
</dbReference>
<dbReference type="PDBsum" id="1I54"/>
<dbReference type="PDBsum" id="1I55"/>
<dbReference type="PDBsum" id="1LFM"/>
<dbReference type="PDBsum" id="3CYT"/>
<dbReference type="PDBsum" id="5CYT"/>
<dbReference type="SMR" id="P81459"/>
<dbReference type="EvolutionaryTrace" id="P81459"/>
<dbReference type="GO" id="GO:0005758">
    <property type="term" value="C:mitochondrial intermembrane space"/>
    <property type="evidence" value="ECO:0007669"/>
    <property type="project" value="UniProtKB-SubCell"/>
</dbReference>
<dbReference type="GO" id="GO:0009055">
    <property type="term" value="F:electron transfer activity"/>
    <property type="evidence" value="ECO:0007669"/>
    <property type="project" value="InterPro"/>
</dbReference>
<dbReference type="GO" id="GO:0020037">
    <property type="term" value="F:heme binding"/>
    <property type="evidence" value="ECO:0007669"/>
    <property type="project" value="InterPro"/>
</dbReference>
<dbReference type="GO" id="GO:0046872">
    <property type="term" value="F:metal ion binding"/>
    <property type="evidence" value="ECO:0007669"/>
    <property type="project" value="UniProtKB-KW"/>
</dbReference>
<dbReference type="FunFam" id="1.10.760.10:FF:000001">
    <property type="entry name" value="Cytochrome c iso-1"/>
    <property type="match status" value="1"/>
</dbReference>
<dbReference type="Gene3D" id="1.10.760.10">
    <property type="entry name" value="Cytochrome c-like domain"/>
    <property type="match status" value="1"/>
</dbReference>
<dbReference type="InterPro" id="IPR009056">
    <property type="entry name" value="Cyt_c-like_dom"/>
</dbReference>
<dbReference type="InterPro" id="IPR036909">
    <property type="entry name" value="Cyt_c-like_dom_sf"/>
</dbReference>
<dbReference type="InterPro" id="IPR002327">
    <property type="entry name" value="Cyt_c_1A/1B"/>
</dbReference>
<dbReference type="PANTHER" id="PTHR11961">
    <property type="entry name" value="CYTOCHROME C"/>
    <property type="match status" value="1"/>
</dbReference>
<dbReference type="Pfam" id="PF00034">
    <property type="entry name" value="Cytochrom_C"/>
    <property type="match status" value="1"/>
</dbReference>
<dbReference type="PRINTS" id="PR00604">
    <property type="entry name" value="CYTCHRMECIAB"/>
</dbReference>
<dbReference type="SUPFAM" id="SSF46626">
    <property type="entry name" value="Cytochrome c"/>
    <property type="match status" value="1"/>
</dbReference>
<dbReference type="PROSITE" id="PS51007">
    <property type="entry name" value="CYTC"/>
    <property type="match status" value="1"/>
</dbReference>
<organism>
    <name type="scientific">Thunnus alalunga</name>
    <name type="common">Albacore</name>
    <name type="synonym">Scomber alalunga</name>
    <dbReference type="NCBI Taxonomy" id="8235"/>
    <lineage>
        <taxon>Eukaryota</taxon>
        <taxon>Metazoa</taxon>
        <taxon>Chordata</taxon>
        <taxon>Craniata</taxon>
        <taxon>Vertebrata</taxon>
        <taxon>Euteleostomi</taxon>
        <taxon>Actinopterygii</taxon>
        <taxon>Neopterygii</taxon>
        <taxon>Teleostei</taxon>
        <taxon>Neoteleostei</taxon>
        <taxon>Acanthomorphata</taxon>
        <taxon>Pelagiaria</taxon>
        <taxon>Scombriformes</taxon>
        <taxon>Scombridae</taxon>
        <taxon>Thunnus</taxon>
    </lineage>
</organism>
<evidence type="ECO:0000250" key="1">
    <source>
        <dbReference type="UniProtKB" id="P00025"/>
    </source>
</evidence>
<evidence type="ECO:0000305" key="2"/>
<evidence type="ECO:0007829" key="3">
    <source>
        <dbReference type="PDB" id="1I54"/>
    </source>
</evidence>
<evidence type="ECO:0007829" key="4">
    <source>
        <dbReference type="PDB" id="5CYT"/>
    </source>
</evidence>
<reference key="1">
    <citation type="journal article" date="1973" name="J. Biol. Chem.">
        <title>The structure of ferrocytochrome c at 2.45 A resolution.</title>
        <authorList>
            <person name="Takano T."/>
            <person name="Kallai O.B."/>
            <person name="Swanson R."/>
            <person name="Dickerson R.E."/>
        </authorList>
    </citation>
    <scope>X-RAY CRYSTALLOGRAPHY (2.45 ANGSTROMS)</scope>
    <source>
        <tissue>Heart</tissue>
    </source>
</reference>
<reference key="2">
    <citation type="journal article" date="1981" name="J. Mol. Biol.">
        <title>Conformation change of cytochrome c. I. Ferrocytochrome c structure refined at 1.5 A resolution.</title>
        <authorList>
            <person name="Takano T."/>
            <person name="Dickerson R.E."/>
        </authorList>
    </citation>
    <scope>X-RAY CRYSTALLOGRAPHY (1.5 ANGSTROMS) OF REDUCED FORM</scope>
    <source>
        <tissue>Heart</tissue>
    </source>
</reference>
<reference key="3">
    <citation type="journal article" date="1980" name="Nature">
        <title>Internal mobility of ferrocytochrome c.</title>
        <authorList>
            <person name="Northrup S.H."/>
            <person name="Pear M.R."/>
            <person name="McCammon J.A."/>
            <person name="Karplus M."/>
            <person name="Takano T."/>
        </authorList>
    </citation>
    <scope>X-RAY CRYSTALLOGRAPHY (1.5 ANGSTROMS) OF REDUCED FORM</scope>
    <source>
        <tissue>Heart</tissue>
    </source>
</reference>
<reference key="4">
    <citation type="journal article" date="1977" name="J. Biol. Chem.">
        <title>Tuna cytochrome c at 2.0 A resolution. I. Ferricytochrome structure analysis.</title>
        <authorList>
            <person name="Swanson R."/>
            <person name="Trus B.L."/>
            <person name="Mandel N."/>
            <person name="Mandel G."/>
            <person name="Kallai O.B."/>
            <person name="Dickerson R.E."/>
        </authorList>
    </citation>
    <scope>X-RAY CRYSTALLOGRAPHY (2.0 ANGSTROMS) OF OXIDIZED FORM</scope>
    <source>
        <tissue>Heart</tissue>
    </source>
</reference>
<reference key="5">
    <citation type="journal article" date="1977" name="J. Biol. Chem.">
        <title>Tuna cytochrome c at 2.0 A resolution. II. Ferrocytochrome structure analysis.</title>
        <authorList>
            <person name="Takano T."/>
            <person name="Trus B.L."/>
            <person name="Mandel N."/>
            <person name="Mandel G."/>
            <person name="Kallai O.B."/>
            <person name="Swanson R."/>
            <person name="Dickerson R.E."/>
        </authorList>
    </citation>
    <scope>X-RAY CRYSTALLOGRAPHY (2.0 ANGSTROMS) OF REDUCED FORM</scope>
    <source>
        <tissue>Heart</tissue>
    </source>
</reference>
<reference key="6">
    <citation type="journal article" date="1977" name="J. Biol. Chem.">
        <title>Tuna cytochrome c at 2.0-A resolution. III. Coordinate optimization and comparison of structures.</title>
        <authorList>
            <person name="Mandel N."/>
            <person name="Mandel G."/>
            <person name="Trus B.L."/>
            <person name="Rosenburg J."/>
            <person name="Carlson G."/>
            <person name="Dickerson R.E."/>
        </authorList>
    </citation>
    <scope>X-RAY CRYSTALLOGRAPHY (2.0 ANGSTROMS) OF OXIDIZED AND REDUCED FORMS</scope>
</reference>
<reference key="7">
    <citation type="journal article" date="1980" name="Proc. Natl. Acad. Sci. U.S.A.">
        <title>Redox conformation changes in refined tuna cytochrome c.</title>
        <authorList>
            <person name="Takano T."/>
            <person name="Dickerson R.E."/>
        </authorList>
    </citation>
    <scope>X-RAY CRYSTALLOGRAPHY (1.5 ANGSTROMS) OF OXIDIZED AND REDUCED FORMS</scope>
    <source>
        <tissue>Heart</tissue>
    </source>
</reference>
<reference key="8">
    <citation type="journal article" date="2001" name="Proc. Natl. Acad. Sci. U.S.A.">
        <title>Electron tunneling in protein crystals.</title>
        <authorList>
            <person name="Tezcan F.A."/>
            <person name="Crane B.R."/>
            <person name="Winkler J.R."/>
            <person name="Gray H.B."/>
        </authorList>
    </citation>
    <scope>X-RAY CRYSTALLOGRAPHY (1.5 ANGSTROMS) OF ZN-SUBSTITUTED FORMS</scope>
    <source>
        <tissue>Heart</tissue>
    </source>
</reference>